<evidence type="ECO:0000305" key="1"/>
<comment type="similarity">
    <text evidence="1">Belongs to the eukaryotic ribosomal protein eL31 family.</text>
</comment>
<name>RL31_HELVI</name>
<reference key="1">
    <citation type="submission" date="2000-12" db="EMBL/GenBank/DDBJ databases">
        <title>A novel antennal binding protein preferentially expressed in female antennae of Heliothis virescens.</title>
        <authorList>
            <person name="Korchi A."/>
            <person name="Breer H."/>
            <person name="Krieger J."/>
        </authorList>
    </citation>
    <scope>NUCLEOTIDE SEQUENCE [MRNA]</scope>
</reference>
<proteinExistence type="evidence at transcript level"/>
<dbReference type="EMBL" id="AJ298149">
    <property type="protein sequence ID" value="CAC19413.1"/>
    <property type="molecule type" value="mRNA"/>
</dbReference>
<dbReference type="SMR" id="Q9GP16"/>
<dbReference type="GO" id="GO:0022625">
    <property type="term" value="C:cytosolic large ribosomal subunit"/>
    <property type="evidence" value="ECO:0007669"/>
    <property type="project" value="TreeGrafter"/>
</dbReference>
<dbReference type="GO" id="GO:0003735">
    <property type="term" value="F:structural constituent of ribosome"/>
    <property type="evidence" value="ECO:0007669"/>
    <property type="project" value="InterPro"/>
</dbReference>
<dbReference type="GO" id="GO:0002181">
    <property type="term" value="P:cytoplasmic translation"/>
    <property type="evidence" value="ECO:0007669"/>
    <property type="project" value="TreeGrafter"/>
</dbReference>
<dbReference type="CDD" id="cd00463">
    <property type="entry name" value="Ribosomal_L31e"/>
    <property type="match status" value="1"/>
</dbReference>
<dbReference type="FunFam" id="3.10.440.10:FF:000001">
    <property type="entry name" value="60S ribosomal protein L31"/>
    <property type="match status" value="1"/>
</dbReference>
<dbReference type="Gene3D" id="3.10.440.10">
    <property type="match status" value="1"/>
</dbReference>
<dbReference type="InterPro" id="IPR000054">
    <property type="entry name" value="Ribosomal_eL31"/>
</dbReference>
<dbReference type="InterPro" id="IPR020052">
    <property type="entry name" value="Ribosomal_eL31_CS"/>
</dbReference>
<dbReference type="InterPro" id="IPR023621">
    <property type="entry name" value="Ribosomal_eL31_dom_sf"/>
</dbReference>
<dbReference type="PANTHER" id="PTHR10956">
    <property type="entry name" value="60S RIBOSOMAL PROTEIN L31"/>
    <property type="match status" value="1"/>
</dbReference>
<dbReference type="PANTHER" id="PTHR10956:SF0">
    <property type="entry name" value="60S RIBOSOMAL PROTEIN L31"/>
    <property type="match status" value="1"/>
</dbReference>
<dbReference type="Pfam" id="PF01198">
    <property type="entry name" value="Ribosomal_L31e"/>
    <property type="match status" value="1"/>
</dbReference>
<dbReference type="SMART" id="SM01380">
    <property type="entry name" value="Ribosomal_L31e"/>
    <property type="match status" value="1"/>
</dbReference>
<dbReference type="SUPFAM" id="SSF54575">
    <property type="entry name" value="Ribosomal protein L31e"/>
    <property type="match status" value="1"/>
</dbReference>
<dbReference type="PROSITE" id="PS01144">
    <property type="entry name" value="RIBOSOMAL_L31E"/>
    <property type="match status" value="1"/>
</dbReference>
<organism>
    <name type="scientific">Heliothis virescens</name>
    <name type="common">Tobacco budworm moth</name>
    <dbReference type="NCBI Taxonomy" id="7102"/>
    <lineage>
        <taxon>Eukaryota</taxon>
        <taxon>Metazoa</taxon>
        <taxon>Ecdysozoa</taxon>
        <taxon>Arthropoda</taxon>
        <taxon>Hexapoda</taxon>
        <taxon>Insecta</taxon>
        <taxon>Pterygota</taxon>
        <taxon>Neoptera</taxon>
        <taxon>Endopterygota</taxon>
        <taxon>Lepidoptera</taxon>
        <taxon>Glossata</taxon>
        <taxon>Ditrysia</taxon>
        <taxon>Noctuoidea</taxon>
        <taxon>Noctuidae</taxon>
        <taxon>Heliothinae</taxon>
        <taxon>Heliothis</taxon>
    </lineage>
</organism>
<sequence>MAKPKGERKGKSAINEVVTREYTVNLHKRLHGVGFKKRAPRAIKEIRKFAEKQMGTPDVRVDTRLNKFLWSKGVRNVPFRVRVRLSRRRNDDEDSAHKLFTLVTYVPVASIKGLQTENVDASQE</sequence>
<keyword id="KW-0687">Ribonucleoprotein</keyword>
<keyword id="KW-0689">Ribosomal protein</keyword>
<accession>Q9GP16</accession>
<protein>
    <recommendedName>
        <fullName evidence="1">Large ribosomal subunit protein eL31</fullName>
    </recommendedName>
    <alternativeName>
        <fullName>60S ribosomal protein L31</fullName>
    </alternativeName>
</protein>
<feature type="chain" id="PRO_0000153773" description="Large ribosomal subunit protein eL31">
    <location>
        <begin position="1"/>
        <end position="124"/>
    </location>
</feature>
<gene>
    <name type="primary">RpL31</name>
</gene>